<sequence length="254" mass="28809">MAAYKLVLIRHGESTWNLENRFSCWYDADLSPAGHEEAKRGGQALRDAGYEFDICLTSVQKRVIRTLWTVLDAIDQMWLPVVRTWRLNERHYGGLTALNKAETAAKHGEAQVKIWRRSYDVPPPPMEPDHPFYSNISKDRRYADLTEDQLPSYESPKDTIARALPFWNEEIVPQIKEGKRVLIAAHGNSLQGIAKHVEGLSEEAIMELNLPTGIPIVYELDKNLKPIKPMQFLGDEETVCKAMEAVAAQGKAKK</sequence>
<protein>
    <recommendedName>
        <fullName>Probable phosphoglycerate mutase 4</fullName>
        <ecNumber evidence="2">5.4.2.11</ecNumber>
        <ecNumber evidence="2">5.4.2.4</ecNumber>
    </recommendedName>
</protein>
<proteinExistence type="inferred from homology"/>
<comment type="catalytic activity">
    <reaction evidence="2">
        <text>(2R)-2-phosphoglycerate = (2R)-3-phosphoglycerate</text>
        <dbReference type="Rhea" id="RHEA:15901"/>
        <dbReference type="ChEBI" id="CHEBI:58272"/>
        <dbReference type="ChEBI" id="CHEBI:58289"/>
        <dbReference type="EC" id="5.4.2.11"/>
    </reaction>
</comment>
<comment type="catalytic activity">
    <reaction evidence="2">
        <text>(2R)-3-phospho-glyceroyl phosphate = (2R)-2,3-bisphosphoglycerate + H(+)</text>
        <dbReference type="Rhea" id="RHEA:17765"/>
        <dbReference type="ChEBI" id="CHEBI:15378"/>
        <dbReference type="ChEBI" id="CHEBI:57604"/>
        <dbReference type="ChEBI" id="CHEBI:58248"/>
        <dbReference type="EC" id="5.4.2.4"/>
    </reaction>
</comment>
<comment type="miscellaneous">
    <text>This is the product of a processed gene created by retroposition from mRNA of an expressed gene. This gene seems to be expressed.</text>
</comment>
<comment type="similarity">
    <text evidence="4">Belongs to the phosphoglycerate mutase family. BPG-dependent PGAM subfamily.</text>
</comment>
<feature type="chain" id="PRO_0000179833" description="Probable phosphoglycerate mutase 4">
    <location>
        <begin position="1"/>
        <end position="254"/>
    </location>
</feature>
<feature type="active site" description="Tele-phosphohistidine intermediate" evidence="2">
    <location>
        <position position="11"/>
    </location>
</feature>
<feature type="active site" description="Proton donor/acceptor" evidence="2">
    <location>
        <position position="89"/>
    </location>
</feature>
<feature type="binding site" evidence="1">
    <location>
        <begin position="10"/>
        <end position="17"/>
    </location>
    <ligand>
        <name>substrate</name>
    </ligand>
</feature>
<feature type="binding site" evidence="1">
    <location>
        <begin position="23"/>
        <end position="24"/>
    </location>
    <ligand>
        <name>substrate</name>
    </ligand>
</feature>
<feature type="binding site" evidence="1">
    <location>
        <position position="62"/>
    </location>
    <ligand>
        <name>substrate</name>
    </ligand>
</feature>
<feature type="binding site" evidence="1">
    <location>
        <begin position="89"/>
        <end position="92"/>
    </location>
    <ligand>
        <name>substrate</name>
    </ligand>
</feature>
<feature type="binding site" evidence="1">
    <location>
        <position position="100"/>
    </location>
    <ligand>
        <name>substrate</name>
    </ligand>
</feature>
<feature type="binding site" evidence="1">
    <location>
        <begin position="116"/>
        <end position="117"/>
    </location>
    <ligand>
        <name>substrate</name>
    </ligand>
</feature>
<feature type="binding site" evidence="1">
    <location>
        <begin position="187"/>
        <end position="188"/>
    </location>
    <ligand>
        <name>substrate</name>
    </ligand>
</feature>
<feature type="site" description="Transition state stabilizer" evidence="1">
    <location>
        <position position="186"/>
    </location>
</feature>
<feature type="modified residue" description="Phosphoserine" evidence="2">
    <location>
        <position position="14"/>
    </location>
</feature>
<feature type="modified residue" description="Phosphoserine" evidence="2">
    <location>
        <position position="23"/>
    </location>
</feature>
<feature type="modified residue" description="Phosphotyrosine" evidence="2">
    <location>
        <position position="26"/>
    </location>
</feature>
<feature type="modified residue" description="Phosphoserine" evidence="2">
    <location>
        <position position="31"/>
    </location>
</feature>
<feature type="modified residue" description="N6-acetyllysine" evidence="3">
    <location>
        <position position="106"/>
    </location>
</feature>
<feature type="modified residue" description="Phosphoserine" evidence="3">
    <location>
        <position position="118"/>
    </location>
</feature>
<feature type="modified residue" description="N6-acetyllysine; alternate" evidence="2">
    <location>
        <position position="251"/>
    </location>
</feature>
<feature type="modified residue" description="N6-succinyllysine; alternate" evidence="3">
    <location>
        <position position="251"/>
    </location>
</feature>
<feature type="modified residue" description="N6-acetyllysine" evidence="2">
    <location>
        <position position="253"/>
    </location>
</feature>
<feature type="modified residue" description="N6-acetyllysine" evidence="2">
    <location>
        <position position="254"/>
    </location>
</feature>
<gene>
    <name type="primary">PGAM4</name>
    <name type="synonym">PGAM3</name>
</gene>
<reference key="1">
    <citation type="journal article" date="2002" name="Mol. Biol. Evol.">
        <title>Evolution of the phosphoglycerate mutase processed gene in human and chimpanzee revealing the origin of a new primate gene.</title>
        <authorList>
            <person name="Betran E."/>
            <person name="Wang W."/>
            <person name="Jin L."/>
            <person name="Long M."/>
        </authorList>
    </citation>
    <scope>NUCLEOTIDE SEQUENCE [GENOMIC DNA]</scope>
</reference>
<reference key="2">
    <citation type="journal article" date="2005" name="PLoS Biol.">
        <title>Emergence of young human genes after a burst of retroposition in primates.</title>
        <authorList>
            <person name="Marques A.C."/>
            <person name="Dupanloup I."/>
            <person name="Vinckenbosch N."/>
            <person name="Reymond A."/>
            <person name="Kaessmann H."/>
        </authorList>
    </citation>
    <scope>NUCLEOTIDE SEQUENCE [GENOMIC DNA]</scope>
</reference>
<keyword id="KW-0007">Acetylation</keyword>
<keyword id="KW-0324">Glycolysis</keyword>
<keyword id="KW-0378">Hydrolase</keyword>
<keyword id="KW-0413">Isomerase</keyword>
<keyword id="KW-0597">Phosphoprotein</keyword>
<keyword id="KW-1185">Reference proteome</keyword>
<organism>
    <name type="scientific">Pan troglodytes</name>
    <name type="common">Chimpanzee</name>
    <dbReference type="NCBI Taxonomy" id="9598"/>
    <lineage>
        <taxon>Eukaryota</taxon>
        <taxon>Metazoa</taxon>
        <taxon>Chordata</taxon>
        <taxon>Craniata</taxon>
        <taxon>Vertebrata</taxon>
        <taxon>Euteleostomi</taxon>
        <taxon>Mammalia</taxon>
        <taxon>Eutheria</taxon>
        <taxon>Euarchontoglires</taxon>
        <taxon>Primates</taxon>
        <taxon>Haplorrhini</taxon>
        <taxon>Catarrhini</taxon>
        <taxon>Hominidae</taxon>
        <taxon>Pan</taxon>
    </lineage>
</organism>
<accession>Q8MKE8</accession>
<accession>Q2VIN5</accession>
<evidence type="ECO:0000250" key="1">
    <source>
        <dbReference type="UniProtKB" id="P00950"/>
    </source>
</evidence>
<evidence type="ECO:0000250" key="2">
    <source>
        <dbReference type="UniProtKB" id="P18669"/>
    </source>
</evidence>
<evidence type="ECO:0000250" key="3">
    <source>
        <dbReference type="UniProtKB" id="Q9DBJ1"/>
    </source>
</evidence>
<evidence type="ECO:0000305" key="4"/>
<name>PGAM4_PANTR</name>
<dbReference type="EC" id="5.4.2.11" evidence="2"/>
<dbReference type="EC" id="5.4.2.4" evidence="2"/>
<dbReference type="EMBL" id="AF465746">
    <property type="protein sequence ID" value="AAM27297.1"/>
    <property type="molecule type" value="Genomic_DNA"/>
</dbReference>
<dbReference type="EMBL" id="DQ120648">
    <property type="protein sequence ID" value="ABB92433.1"/>
    <property type="molecule type" value="Genomic_DNA"/>
</dbReference>
<dbReference type="RefSeq" id="NP_001009163.1">
    <property type="nucleotide sequence ID" value="NM_001009163.1"/>
</dbReference>
<dbReference type="SMR" id="Q8MKE8"/>
<dbReference type="FunCoup" id="Q8MKE8">
    <property type="interactions" value="398"/>
</dbReference>
<dbReference type="STRING" id="9598.ENSPTRP00000004915"/>
<dbReference type="PaxDb" id="9598-ENSPTRP00000004915"/>
<dbReference type="GeneID" id="494122"/>
<dbReference type="KEGG" id="ptr:494122"/>
<dbReference type="CTD" id="441531"/>
<dbReference type="eggNOG" id="KOG0235">
    <property type="taxonomic scope" value="Eukaryota"/>
</dbReference>
<dbReference type="InParanoid" id="Q8MKE8"/>
<dbReference type="Proteomes" id="UP000002277">
    <property type="component" value="Unplaced"/>
</dbReference>
<dbReference type="GO" id="GO:0004082">
    <property type="term" value="F:bisphosphoglycerate mutase activity"/>
    <property type="evidence" value="ECO:0007669"/>
    <property type="project" value="UniProtKB-EC"/>
</dbReference>
<dbReference type="GO" id="GO:0016787">
    <property type="term" value="F:hydrolase activity"/>
    <property type="evidence" value="ECO:0007669"/>
    <property type="project" value="UniProtKB-KW"/>
</dbReference>
<dbReference type="GO" id="GO:0004619">
    <property type="term" value="F:phosphoglycerate mutase activity"/>
    <property type="evidence" value="ECO:0007669"/>
    <property type="project" value="UniProtKB-EC"/>
</dbReference>
<dbReference type="GO" id="GO:0006096">
    <property type="term" value="P:glycolytic process"/>
    <property type="evidence" value="ECO:0007669"/>
    <property type="project" value="UniProtKB-KW"/>
</dbReference>
<dbReference type="CDD" id="cd07067">
    <property type="entry name" value="HP_PGM_like"/>
    <property type="match status" value="1"/>
</dbReference>
<dbReference type="FunFam" id="3.40.50.1240:FF:000007">
    <property type="entry name" value="Phosphoglycerate mutase"/>
    <property type="match status" value="1"/>
</dbReference>
<dbReference type="Gene3D" id="3.40.50.1240">
    <property type="entry name" value="Phosphoglycerate mutase-like"/>
    <property type="match status" value="1"/>
</dbReference>
<dbReference type="HAMAP" id="MF_01039">
    <property type="entry name" value="PGAM_GpmA"/>
    <property type="match status" value="1"/>
</dbReference>
<dbReference type="InterPro" id="IPR013078">
    <property type="entry name" value="His_Pase_superF_clade-1"/>
</dbReference>
<dbReference type="InterPro" id="IPR029033">
    <property type="entry name" value="His_PPase_superfam"/>
</dbReference>
<dbReference type="InterPro" id="IPR001345">
    <property type="entry name" value="PG/BPGM_mutase_AS"/>
</dbReference>
<dbReference type="InterPro" id="IPR005952">
    <property type="entry name" value="Phosphogly_mut1"/>
</dbReference>
<dbReference type="NCBIfam" id="TIGR01258">
    <property type="entry name" value="pgm_1"/>
    <property type="match status" value="1"/>
</dbReference>
<dbReference type="NCBIfam" id="NF010713">
    <property type="entry name" value="PRK14115.1"/>
    <property type="match status" value="1"/>
</dbReference>
<dbReference type="PANTHER" id="PTHR11931">
    <property type="entry name" value="PHOSPHOGLYCERATE MUTASE"/>
    <property type="match status" value="1"/>
</dbReference>
<dbReference type="Pfam" id="PF00300">
    <property type="entry name" value="His_Phos_1"/>
    <property type="match status" value="1"/>
</dbReference>
<dbReference type="SMART" id="SM00855">
    <property type="entry name" value="PGAM"/>
    <property type="match status" value="1"/>
</dbReference>
<dbReference type="SUPFAM" id="SSF53254">
    <property type="entry name" value="Phosphoglycerate mutase-like"/>
    <property type="match status" value="1"/>
</dbReference>
<dbReference type="PROSITE" id="PS00175">
    <property type="entry name" value="PG_MUTASE"/>
    <property type="match status" value="1"/>
</dbReference>